<accession>Q0N4U8</accession>
<name>CJEA_CONPO</name>
<reference key="1">
    <citation type="journal article" date="2006" name="Biochemistry">
        <title>A novel conotoxin inhibitor of Kv1.6 channel and nAChR subtypes defines a new superfamily of conotoxins.</title>
        <authorList>
            <person name="Imperial J.S."/>
            <person name="Bansal P.S."/>
            <person name="Alewood P.F."/>
            <person name="Daly N.L."/>
            <person name="Craik D.J."/>
            <person name="Sporning A."/>
            <person name="Terlau H."/>
            <person name="Lopez-Vera E."/>
            <person name="Bandyopadhyay P.K."/>
            <person name="Olivera B.M."/>
        </authorList>
    </citation>
    <scope>NUCLEOTIDE SEQUENCE [MRNA]</scope>
    <scope>PROTEIN SEQUENCE OF 40-64</scope>
    <scope>SYNTHESIS OF 40-64</scope>
    <scope>MASS SPECTROMETRY</scope>
    <scope>AMIDATION AT ARG-64</scope>
    <scope>DISULFIDE BONDS</scope>
    <scope>STRUCTURE BY NMR OF 40-64</scope>
    <scope>SUBCELLULAR LOCATION</scope>
    <source>
        <tissue>Venom</tissue>
        <tissue>Venom duct</tissue>
    </source>
</reference>
<protein>
    <recommendedName>
        <fullName evidence="3">Alpha/kappa-conotoxin pl14a</fullName>
    </recommendedName>
    <alternativeName>
        <fullName evidence="4">Conotoxin PlXIVA</fullName>
    </alternativeName>
</protein>
<keyword id="KW-0002">3D-structure</keyword>
<keyword id="KW-0008">Acetylcholine receptor inhibiting toxin</keyword>
<keyword id="KW-0027">Amidation</keyword>
<keyword id="KW-0903">Direct protein sequencing</keyword>
<keyword id="KW-1015">Disulfide bond</keyword>
<keyword id="KW-0872">Ion channel impairing toxin</keyword>
<keyword id="KW-0528">Neurotoxin</keyword>
<keyword id="KW-0629">Postsynaptic neurotoxin</keyword>
<keyword id="KW-0632">Potassium channel impairing toxin</keyword>
<keyword id="KW-0964">Secreted</keyword>
<keyword id="KW-0732">Signal</keyword>
<keyword id="KW-0800">Toxin</keyword>
<keyword id="KW-1220">Voltage-gated potassium channel impairing toxin</keyword>
<feature type="signal peptide" evidence="1">
    <location>
        <begin position="1"/>
        <end position="24"/>
    </location>
</feature>
<feature type="propeptide" id="PRO_0000260006" evidence="2">
    <location>
        <begin position="25"/>
        <end position="39"/>
    </location>
</feature>
<feature type="peptide" id="PRO_0000260007" description="Alpha/kappa-conotoxin pl14a" evidence="2">
    <location>
        <begin position="40"/>
        <end position="64"/>
    </location>
</feature>
<feature type="propeptide" id="PRO_0000260008">
    <location>
        <begin position="65"/>
        <end position="76"/>
    </location>
</feature>
<feature type="modified residue" description="Arginine amide" evidence="2">
    <location>
        <position position="64"/>
    </location>
</feature>
<feature type="disulfide bond" evidence="2">
    <location>
        <begin position="46"/>
        <end position="61"/>
    </location>
</feature>
<feature type="disulfide bond" evidence="2">
    <location>
        <begin position="50"/>
        <end position="63"/>
    </location>
</feature>
<feature type="helix" evidence="6">
    <location>
        <begin position="44"/>
        <end position="52"/>
    </location>
</feature>
<feature type="helix" evidence="6">
    <location>
        <begin position="54"/>
        <end position="56"/>
    </location>
</feature>
<feature type="helix" evidence="6">
    <location>
        <begin position="59"/>
        <end position="61"/>
    </location>
</feature>
<evidence type="ECO:0000255" key="1"/>
<evidence type="ECO:0000269" key="2">
    <source>
    </source>
</evidence>
<evidence type="ECO:0000303" key="3">
    <source>
    </source>
</evidence>
<evidence type="ECO:0000305" key="4"/>
<evidence type="ECO:0000305" key="5">
    <source>
    </source>
</evidence>
<evidence type="ECO:0007829" key="6">
    <source>
        <dbReference type="PDB" id="2FQC"/>
    </source>
</evidence>
<organism>
    <name type="scientific">Conus planorbis</name>
    <name type="common">Planorbis cone</name>
    <dbReference type="NCBI Taxonomy" id="97183"/>
    <lineage>
        <taxon>Eukaryota</taxon>
        <taxon>Metazoa</taxon>
        <taxon>Spiralia</taxon>
        <taxon>Lophotrochozoa</taxon>
        <taxon>Mollusca</taxon>
        <taxon>Gastropoda</taxon>
        <taxon>Caenogastropoda</taxon>
        <taxon>Neogastropoda</taxon>
        <taxon>Conoidea</taxon>
        <taxon>Conidae</taxon>
        <taxon>Conus</taxon>
        <taxon>Strategoconus</taxon>
    </lineage>
</organism>
<sequence length="76" mass="8298">MPSVRSVTCCCLLWMMFSVQLVTPGSPGTAQLSGHRTARFPRPRICNLACRAGIGHKYPFCHCRGKRDAVSSSMAV</sequence>
<dbReference type="EMBL" id="DQ447640">
    <property type="protein sequence ID" value="ABE27006.1"/>
    <property type="molecule type" value="mRNA"/>
</dbReference>
<dbReference type="PDB" id="2FQC">
    <property type="method" value="NMR"/>
    <property type="chains" value="A=40-64"/>
</dbReference>
<dbReference type="PDB" id="2NAV">
    <property type="method" value="NMR"/>
    <property type="chains" value="A=53-64"/>
</dbReference>
<dbReference type="PDB" id="2NAW">
    <property type="method" value="NMR"/>
    <property type="chains" value="A=54-64"/>
</dbReference>
<dbReference type="PDBsum" id="2FQC"/>
<dbReference type="PDBsum" id="2NAV"/>
<dbReference type="PDBsum" id="2NAW"/>
<dbReference type="BMRB" id="Q0N4U8"/>
<dbReference type="SMR" id="Q0N4U8"/>
<dbReference type="ConoServer" id="1183">
    <property type="toxin name" value="PlXIVA precursor"/>
</dbReference>
<dbReference type="EvolutionaryTrace" id="Q0N4U8"/>
<dbReference type="GO" id="GO:0005576">
    <property type="term" value="C:extracellular region"/>
    <property type="evidence" value="ECO:0007669"/>
    <property type="project" value="UniProtKB-SubCell"/>
</dbReference>
<dbReference type="GO" id="GO:0035792">
    <property type="term" value="C:host cell postsynaptic membrane"/>
    <property type="evidence" value="ECO:0007669"/>
    <property type="project" value="UniProtKB-KW"/>
</dbReference>
<dbReference type="GO" id="GO:0030550">
    <property type="term" value="F:acetylcholine receptor inhibitor activity"/>
    <property type="evidence" value="ECO:0007669"/>
    <property type="project" value="UniProtKB-KW"/>
</dbReference>
<dbReference type="GO" id="GO:0015459">
    <property type="term" value="F:potassium channel regulator activity"/>
    <property type="evidence" value="ECO:0007669"/>
    <property type="project" value="UniProtKB-KW"/>
</dbReference>
<dbReference type="GO" id="GO:0090729">
    <property type="term" value="F:toxin activity"/>
    <property type="evidence" value="ECO:0007669"/>
    <property type="project" value="UniProtKB-KW"/>
</dbReference>
<comment type="function">
    <text evidence="2">Highly inhibits both nicotinic acetylcholine receptors (neuronal (IC(50)=8.7 uM for alpha-3/beta-4) and muscular (IC(50)=0.54 uM for alpha-1-beta-1-epsilon-delta (CHRNA1-CHRNB1-CHRND-CHRNE)) subtypes) and the voltage-gated potassium channel Kv1.6/KCNA6 subtype (IC(50)=1.59 uM).</text>
</comment>
<comment type="subcellular location">
    <subcellularLocation>
        <location evidence="2">Secreted</location>
    </subcellularLocation>
</comment>
<comment type="tissue specificity">
    <text evidence="5">Expressed by the venom duct.</text>
</comment>
<comment type="domain">
    <text evidence="4">The cysteine framework is XIV (C-C-C-C).</text>
</comment>
<comment type="mass spectrometry" mass="2909.5" method="Electrospray" evidence="2"/>
<comment type="miscellaneous">
    <text evidence="5">No or very small inhibition is observed on Kv1.1/KCNA1, Kv1.2/KCNA2, Kv1.3/KCNA3, Kv1.4/KCNA4, Kv1.5/KCNA5 and Nav1.2/SCN2A.</text>
</comment>
<comment type="similarity">
    <text evidence="4">Belongs to the conotoxin J superfamily.</text>
</comment>
<proteinExistence type="evidence at protein level"/>